<keyword id="KW-1185">Reference proteome</keyword>
<feature type="chain" id="PRO_0000410561" description="Uncharacterized protein 056R">
    <location>
        <begin position="1"/>
        <end position="145"/>
    </location>
</feature>
<accession>Q6GZR9</accession>
<protein>
    <recommendedName>
        <fullName>Uncharacterized protein 056R</fullName>
    </recommendedName>
</protein>
<organism>
    <name type="scientific">Frog virus 3 (isolate Goorha)</name>
    <name type="common">FV-3</name>
    <dbReference type="NCBI Taxonomy" id="654924"/>
    <lineage>
        <taxon>Viruses</taxon>
        <taxon>Varidnaviria</taxon>
        <taxon>Bamfordvirae</taxon>
        <taxon>Nucleocytoviricota</taxon>
        <taxon>Megaviricetes</taxon>
        <taxon>Pimascovirales</taxon>
        <taxon>Iridoviridae</taxon>
        <taxon>Alphairidovirinae</taxon>
        <taxon>Ranavirus</taxon>
        <taxon>Frog virus 3</taxon>
    </lineage>
</organism>
<dbReference type="EMBL" id="AY548484">
    <property type="protein sequence ID" value="AAT09716.1"/>
    <property type="molecule type" value="Genomic_DNA"/>
</dbReference>
<dbReference type="RefSeq" id="YP_031635.1">
    <property type="nucleotide sequence ID" value="NC_005946.1"/>
</dbReference>
<dbReference type="KEGG" id="vg:2947756"/>
<dbReference type="Proteomes" id="UP000008770">
    <property type="component" value="Segment"/>
</dbReference>
<gene>
    <name type="ORF">FV3-056R</name>
</gene>
<name>056R_FRG3G</name>
<sequence>MGVYSPAPRTPRGPWNIRIRFLSWSNSFLLEVKKNYGDVYLCDVCPVRPPGLQAPREQPVLHDRKVLHLYGQDSGVRDVQEVLWNPVSHQEVRRDNHGVLHGRRRARVRQAEEGRRRRQEGHRFRDWERLHQRVEGCPGLQGHGF</sequence>
<reference key="1">
    <citation type="journal article" date="2004" name="Virology">
        <title>Comparative genomic analyses of frog virus 3, type species of the genus Ranavirus (family Iridoviridae).</title>
        <authorList>
            <person name="Tan W.G."/>
            <person name="Barkman T.J."/>
            <person name="Gregory Chinchar V."/>
            <person name="Essani K."/>
        </authorList>
    </citation>
    <scope>NUCLEOTIDE SEQUENCE [LARGE SCALE GENOMIC DNA]</scope>
</reference>
<organismHost>
    <name type="scientific">Dryophytes versicolor</name>
    <name type="common">chameleon treefrog</name>
    <dbReference type="NCBI Taxonomy" id="30343"/>
</organismHost>
<organismHost>
    <name type="scientific">Lithobates pipiens</name>
    <name type="common">Northern leopard frog</name>
    <name type="synonym">Rana pipiens</name>
    <dbReference type="NCBI Taxonomy" id="8404"/>
</organismHost>
<organismHost>
    <name type="scientific">Lithobates sylvaticus</name>
    <name type="common">Wood frog</name>
    <name type="synonym">Rana sylvatica</name>
    <dbReference type="NCBI Taxonomy" id="45438"/>
</organismHost>
<organismHost>
    <name type="scientific">Notophthalmus viridescens</name>
    <name type="common">Eastern newt</name>
    <name type="synonym">Triturus viridescens</name>
    <dbReference type="NCBI Taxonomy" id="8316"/>
</organismHost>
<proteinExistence type="predicted"/>